<protein>
    <recommendedName>
        <fullName evidence="9">RxLR effector protein CRE5</fullName>
        <ecNumber evidence="10">3.6.1.-</ecNumber>
    </recommendedName>
    <alternativeName>
        <fullName evidence="8">Core RXLR effector 5</fullName>
    </alternativeName>
</protein>
<accession>D0N4K2</accession>
<reference key="1">
    <citation type="journal article" date="2009" name="Nature">
        <title>Genome sequence and analysis of the Irish potato famine pathogen Phytophthora infestans.</title>
        <authorList>
            <consortium name="The Broad Institute Genome Sequencing Platform"/>
            <person name="Haas B.J."/>
            <person name="Kamoun S."/>
            <person name="Zody M.C."/>
            <person name="Jiang R.H."/>
            <person name="Handsaker R.E."/>
            <person name="Cano L.M."/>
            <person name="Grabherr M."/>
            <person name="Kodira C.D."/>
            <person name="Raffaele S."/>
            <person name="Torto-Alalibo T."/>
            <person name="Bozkurt T.O."/>
            <person name="Ah-Fong A.M."/>
            <person name="Alvarado L."/>
            <person name="Anderson V.L."/>
            <person name="Armstrong M.R."/>
            <person name="Avrova A."/>
            <person name="Baxter L."/>
            <person name="Beynon J."/>
            <person name="Boevink P.C."/>
            <person name="Bollmann S.R."/>
            <person name="Bos J.I."/>
            <person name="Bulone V."/>
            <person name="Cai G."/>
            <person name="Cakir C."/>
            <person name="Carrington J.C."/>
            <person name="Chawner M."/>
            <person name="Conti L."/>
            <person name="Costanzo S."/>
            <person name="Ewan R."/>
            <person name="Fahlgren N."/>
            <person name="Fischbach M.A."/>
            <person name="Fugelstad J."/>
            <person name="Gilroy E.M."/>
            <person name="Gnerre S."/>
            <person name="Green P.J."/>
            <person name="Grenville-Briggs L.J."/>
            <person name="Griffith J."/>
            <person name="Grunwald N.J."/>
            <person name="Horn K."/>
            <person name="Horner N.R."/>
            <person name="Hu C.H."/>
            <person name="Huitema E."/>
            <person name="Jeong D.H."/>
            <person name="Jones A.M."/>
            <person name="Jones J.D."/>
            <person name="Jones R.W."/>
            <person name="Karlsson E.K."/>
            <person name="Kunjeti S.G."/>
            <person name="Lamour K."/>
            <person name="Liu Z."/>
            <person name="Ma L."/>
            <person name="Maclean D."/>
            <person name="Chibucos M.C."/>
            <person name="McDonald H."/>
            <person name="McWalters J."/>
            <person name="Meijer H.J."/>
            <person name="Morgan W."/>
            <person name="Morris P.F."/>
            <person name="Munro C.A."/>
            <person name="O'Neill K."/>
            <person name="Ospina-Giraldo M."/>
            <person name="Pinzon A."/>
            <person name="Pritchard L."/>
            <person name="Ramsahoye B."/>
            <person name="Ren Q."/>
            <person name="Restrepo S."/>
            <person name="Roy S."/>
            <person name="Sadanandom A."/>
            <person name="Savidor A."/>
            <person name="Schornack S."/>
            <person name="Schwartz D.C."/>
            <person name="Schumann U.D."/>
            <person name="Schwessinger B."/>
            <person name="Seyer L."/>
            <person name="Sharpe T."/>
            <person name="Silvar C."/>
            <person name="Song J."/>
            <person name="Studholme D.J."/>
            <person name="Sykes S."/>
            <person name="Thines M."/>
            <person name="van de Vondervoort P.J."/>
            <person name="Phuntumart V."/>
            <person name="Wawra S."/>
            <person name="Weide R."/>
            <person name="Win J."/>
            <person name="Young C."/>
            <person name="Zhou S."/>
            <person name="Fry W."/>
            <person name="Meyers B.C."/>
            <person name="van West P."/>
            <person name="Ristaino J."/>
            <person name="Govers F."/>
            <person name="Birch P.R."/>
            <person name="Whisson S.C."/>
            <person name="Judelson H.S."/>
            <person name="Nusbaum C."/>
        </authorList>
    </citation>
    <scope>NUCLEOTIDE SEQUENCE [LARGE SCALE GENOMIC DNA]</scope>
    <scope>INDUCTION</scope>
    <source>
        <strain>T30-4</strain>
    </source>
</reference>
<reference key="2">
    <citation type="journal article" date="2017" name="BMC Genomics">
        <title>RNA-seq of life stages of the oomycete Phytophthora infestans reveals dynamic changes in metabolic, signal transduction, and pathogenesis genes and a major role for calcium signaling in development.</title>
        <authorList>
            <person name="Ah-Fong A.M."/>
            <person name="Kim K.S."/>
            <person name="Judelson H.S."/>
        </authorList>
    </citation>
    <scope>INDUCTION</scope>
</reference>
<reference key="3">
    <citation type="journal article" date="2017" name="Front. Plant Sci.">
        <title>Conserved RXLR effector genes of Phytophthora infestans expressed at the early stage of potato infection are suppressive to host defense.</title>
        <authorList>
            <person name="Yin J."/>
            <person name="Gu B."/>
            <person name="Huang G."/>
            <person name="Tian Y."/>
            <person name="Quan J."/>
            <person name="Lindqvist-Kreuze H."/>
            <person name="Shan W."/>
        </authorList>
    </citation>
    <scope>INDUCTION</scope>
    <scope>FUNCTION</scope>
    <scope>DOMAIN</scope>
</reference>
<reference key="4">
    <citation type="journal article" date="2019" name="J. Exp. Bot.">
        <title>Phytophthora infestans RXLR effectors act in concert at diverse subcellular locations to enhance host colonization.</title>
        <authorList>
            <person name="Wang S."/>
            <person name="McLellan H."/>
            <person name="Bukharova T."/>
            <person name="He Q."/>
            <person name="Murphy F."/>
            <person name="Shi J."/>
            <person name="Sun S."/>
            <person name="van Weymers P."/>
            <person name="Ren Y."/>
            <person name="Thilliez G."/>
            <person name="Wang H."/>
            <person name="Chen X."/>
            <person name="Engelhardt S."/>
            <person name="Vleeshouwers V."/>
            <person name="Gilroy E.M."/>
            <person name="Whisson S.C."/>
            <person name="Hein I."/>
            <person name="Wang X."/>
            <person name="Tian Z."/>
            <person name="Birch P.R.J."/>
            <person name="Boevink P.C."/>
        </authorList>
    </citation>
    <scope>SUBCELLULAR LOCATION</scope>
    <scope>FUNCTION</scope>
</reference>
<comment type="function">
    <text evidence="6 7">Effector that is involved in host plant infection. Contributes to virulence during the early infection stage, by inhibiting plant defense responses induced by both PAMP-triggered immunity (PTI) and effector-triggered immunity (ETI).</text>
</comment>
<comment type="subcellular location">
    <subcellularLocation>
        <location evidence="7">Secreted</location>
    </subcellularLocation>
    <subcellularLocation>
        <location evidence="7">Host cytoplasm</location>
    </subcellularLocation>
    <subcellularLocation>
        <location evidence="7">Host nucleus</location>
        <location evidence="7">Host nucleolus</location>
    </subcellularLocation>
    <subcellularLocation>
        <location evidence="7">Host nucleus</location>
    </subcellularLocation>
</comment>
<comment type="induction">
    <text evidence="4 5 6">Expression is induced during host plant infection.</text>
</comment>
<comment type="domain">
    <text evidence="11">The RxLR-dEER motif acts to carry the protein into the host cell cytoplasm through binding to cell surface phosphatidylinositol-3-phosphate.</text>
</comment>
<comment type="similarity">
    <text evidence="10">In the N-terminal section; belongs to the RxLR effector family.</text>
</comment>
<comment type="similarity">
    <text evidence="10">In the C-terminal section; belongs to the Nudix hydrolase family.</text>
</comment>
<feature type="signal peptide" evidence="1">
    <location>
        <begin position="1"/>
        <end position="19"/>
    </location>
</feature>
<feature type="chain" id="PRO_5003012945" description="RxLR effector protein CRE5">
    <location>
        <begin position="20"/>
        <end position="254"/>
    </location>
</feature>
<feature type="domain" description="Nudix hydrolase" evidence="3">
    <location>
        <begin position="191"/>
        <end position="254"/>
    </location>
</feature>
<feature type="short sequence motif" description="RxLR-dEER" evidence="11">
    <location>
        <begin position="53"/>
        <end position="63"/>
    </location>
</feature>
<feature type="short sequence motif" description="Nudix box" evidence="3">
    <location>
        <begin position="228"/>
        <end position="249"/>
    </location>
</feature>
<feature type="glycosylation site" description="N-linked (GlcNAc...) asparagine" evidence="2">
    <location>
        <position position="49"/>
    </location>
</feature>
<organism>
    <name type="scientific">Phytophthora infestans (strain T30-4)</name>
    <name type="common">Potato late blight agent</name>
    <dbReference type="NCBI Taxonomy" id="403677"/>
    <lineage>
        <taxon>Eukaryota</taxon>
        <taxon>Sar</taxon>
        <taxon>Stramenopiles</taxon>
        <taxon>Oomycota</taxon>
        <taxon>Peronosporales</taxon>
        <taxon>Peronosporaceae</taxon>
        <taxon>Phytophthora</taxon>
    </lineage>
</organism>
<proteinExistence type="evidence at transcript level"/>
<dbReference type="EC" id="3.6.1.-" evidence="10"/>
<dbReference type="EMBL" id="DS028125">
    <property type="protein sequence ID" value="EEY69810.1"/>
    <property type="molecule type" value="Genomic_DNA"/>
</dbReference>
<dbReference type="RefSeq" id="XP_002998457.1">
    <property type="nucleotide sequence ID" value="XM_002998411.1"/>
</dbReference>
<dbReference type="SMR" id="D0N4K2"/>
<dbReference type="STRING" id="403677.D0N4K2"/>
<dbReference type="GlyCosmos" id="D0N4K2">
    <property type="glycosylation" value="1 site, No reported glycans"/>
</dbReference>
<dbReference type="EnsemblProtists" id="PITG_06308T0">
    <property type="protein sequence ID" value="PITG_06308T0"/>
    <property type="gene ID" value="PITG_06308"/>
</dbReference>
<dbReference type="GeneID" id="9465996"/>
<dbReference type="KEGG" id="pif:PITG_06308"/>
<dbReference type="VEuPathDB" id="FungiDB:PITG_06308"/>
<dbReference type="eggNOG" id="KOG2839">
    <property type="taxonomic scope" value="Eukaryota"/>
</dbReference>
<dbReference type="HOGENOM" id="CLU_069948_1_0_1"/>
<dbReference type="InParanoid" id="D0N4K2"/>
<dbReference type="OrthoDB" id="128634at2759"/>
<dbReference type="Proteomes" id="UP000006643">
    <property type="component" value="Partially assembled WGS sequence"/>
</dbReference>
<dbReference type="GO" id="GO:0005737">
    <property type="term" value="C:cytoplasm"/>
    <property type="evidence" value="ECO:0007669"/>
    <property type="project" value="TreeGrafter"/>
</dbReference>
<dbReference type="GO" id="GO:0005576">
    <property type="term" value="C:extracellular region"/>
    <property type="evidence" value="ECO:0007669"/>
    <property type="project" value="UniProtKB-SubCell"/>
</dbReference>
<dbReference type="GO" id="GO:0030430">
    <property type="term" value="C:host cell cytoplasm"/>
    <property type="evidence" value="ECO:0007669"/>
    <property type="project" value="UniProtKB-SubCell"/>
</dbReference>
<dbReference type="GO" id="GO:0044196">
    <property type="term" value="C:host cell nucleolus"/>
    <property type="evidence" value="ECO:0007669"/>
    <property type="project" value="UniProtKB-SubCell"/>
</dbReference>
<dbReference type="GO" id="GO:0005634">
    <property type="term" value="C:nucleus"/>
    <property type="evidence" value="ECO:0007669"/>
    <property type="project" value="TreeGrafter"/>
</dbReference>
<dbReference type="GO" id="GO:0016787">
    <property type="term" value="F:hydrolase activity"/>
    <property type="evidence" value="ECO:0007669"/>
    <property type="project" value="UniProtKB-KW"/>
</dbReference>
<dbReference type="GO" id="GO:0046872">
    <property type="term" value="F:metal ion binding"/>
    <property type="evidence" value="ECO:0007669"/>
    <property type="project" value="UniProtKB-KW"/>
</dbReference>
<dbReference type="Gene3D" id="3.90.79.10">
    <property type="entry name" value="Nucleoside Triphosphate Pyrophosphohydrolase"/>
    <property type="match status" value="1"/>
</dbReference>
<dbReference type="InterPro" id="IPR015797">
    <property type="entry name" value="NUDIX_hydrolase-like_dom_sf"/>
</dbReference>
<dbReference type="InterPro" id="IPR020084">
    <property type="entry name" value="NUDIX_hydrolase_CS"/>
</dbReference>
<dbReference type="InterPro" id="IPR000086">
    <property type="entry name" value="NUDIX_hydrolase_dom"/>
</dbReference>
<dbReference type="PANTHER" id="PTHR12629">
    <property type="entry name" value="DIPHOSPHOINOSITOL POLYPHOSPHATE PHOSPHOHYDROLASE"/>
    <property type="match status" value="1"/>
</dbReference>
<dbReference type="PANTHER" id="PTHR12629:SF0">
    <property type="entry name" value="DIPHOSPHOINOSITOL-POLYPHOSPHATE DIPHOSPHATASE"/>
    <property type="match status" value="1"/>
</dbReference>
<dbReference type="Pfam" id="PF00293">
    <property type="entry name" value="NUDIX"/>
    <property type="match status" value="1"/>
</dbReference>
<dbReference type="SUPFAM" id="SSF55811">
    <property type="entry name" value="Nudix"/>
    <property type="match status" value="1"/>
</dbReference>
<dbReference type="PROSITE" id="PS51462">
    <property type="entry name" value="NUDIX"/>
    <property type="match status" value="1"/>
</dbReference>
<dbReference type="PROSITE" id="PS00893">
    <property type="entry name" value="NUDIX_BOX"/>
    <property type="match status" value="1"/>
</dbReference>
<gene>
    <name evidence="8" type="primary">CRE5</name>
    <name type="ORF">PITG_06308</name>
</gene>
<sequence length="254" mass="28176">MQTIQLIIFVAFVLSRAAASISSFSDPTSIVNINHDANRLSRALAAGQNQTQRSLRQHEGEDRGAIDKADEVVSKMKALMGTAKNVPNNLAALIAKRSKTAGEFVRRPFLVSKLSKRYNIADQLSFSTLKQLDKIDNMRIVDIKNGIKGNKKTPNGMRRKIKHFEGMKTAPQKFLESHVGRDMQRYGKDGSRWLSAGVVTRTTDQGERQILLISSSNPARGDFLLPKGGWDRGEKIKKAALREVMEEGGVCRAL</sequence>
<name>CRE5_PHYIT</name>
<keyword id="KW-0325">Glycoprotein</keyword>
<keyword id="KW-1035">Host cytoplasm</keyword>
<keyword id="KW-1048">Host nucleus</keyword>
<keyword id="KW-0378">Hydrolase</keyword>
<keyword id="KW-0479">Metal-binding</keyword>
<keyword id="KW-1185">Reference proteome</keyword>
<keyword id="KW-0964">Secreted</keyword>
<keyword id="KW-0732">Signal</keyword>
<evidence type="ECO:0000255" key="1"/>
<evidence type="ECO:0000255" key="2">
    <source>
        <dbReference type="PROSITE-ProRule" id="PRU00498"/>
    </source>
</evidence>
<evidence type="ECO:0000255" key="3">
    <source>
        <dbReference type="PROSITE-ProRule" id="PRU00794"/>
    </source>
</evidence>
<evidence type="ECO:0000269" key="4">
    <source>
    </source>
</evidence>
<evidence type="ECO:0000269" key="5">
    <source>
    </source>
</evidence>
<evidence type="ECO:0000269" key="6">
    <source>
    </source>
</evidence>
<evidence type="ECO:0000269" key="7">
    <source>
    </source>
</evidence>
<evidence type="ECO:0000303" key="8">
    <source>
    </source>
</evidence>
<evidence type="ECO:0000303" key="9">
    <source>
    </source>
</evidence>
<evidence type="ECO:0000305" key="10"/>
<evidence type="ECO:0000305" key="11">
    <source>
    </source>
</evidence>